<protein>
    <recommendedName>
        <fullName evidence="1">Cyanate hydratase</fullName>
        <shortName evidence="1">Cyanase</shortName>
        <ecNumber evidence="1">4.2.1.104</ecNumber>
    </recommendedName>
    <alternativeName>
        <fullName evidence="1">Cyanate hydrolase</fullName>
    </alternativeName>
    <alternativeName>
        <fullName evidence="1">Cyanate lyase</fullName>
    </alternativeName>
</protein>
<dbReference type="EC" id="4.2.1.104" evidence="1"/>
<dbReference type="EMBL" id="CU928164">
    <property type="protein sequence ID" value="CAR16478.1"/>
    <property type="molecule type" value="Genomic_DNA"/>
</dbReference>
<dbReference type="RefSeq" id="WP_000616241.1">
    <property type="nucleotide sequence ID" value="NC_011750.1"/>
</dbReference>
<dbReference type="RefSeq" id="YP_002406380.1">
    <property type="nucleotide sequence ID" value="NC_011750.1"/>
</dbReference>
<dbReference type="SMR" id="B7NK15"/>
<dbReference type="STRING" id="585057.ECIAI39_0338"/>
<dbReference type="GeneID" id="75202503"/>
<dbReference type="KEGG" id="ect:ECIAI39_0338"/>
<dbReference type="PATRIC" id="fig|585057.6.peg.365"/>
<dbReference type="HOGENOM" id="CLU_103452_1_1_6"/>
<dbReference type="Proteomes" id="UP000000749">
    <property type="component" value="Chromosome"/>
</dbReference>
<dbReference type="GO" id="GO:0008824">
    <property type="term" value="F:cyanate hydratase activity"/>
    <property type="evidence" value="ECO:0007669"/>
    <property type="project" value="UniProtKB-UniRule"/>
</dbReference>
<dbReference type="GO" id="GO:0003677">
    <property type="term" value="F:DNA binding"/>
    <property type="evidence" value="ECO:0007669"/>
    <property type="project" value="InterPro"/>
</dbReference>
<dbReference type="GO" id="GO:0009439">
    <property type="term" value="P:cyanate metabolic process"/>
    <property type="evidence" value="ECO:0007669"/>
    <property type="project" value="UniProtKB-UniRule"/>
</dbReference>
<dbReference type="CDD" id="cd00559">
    <property type="entry name" value="Cyanase_C"/>
    <property type="match status" value="1"/>
</dbReference>
<dbReference type="FunFam" id="3.30.1160.10:FF:000001">
    <property type="entry name" value="Cyanate hydratase"/>
    <property type="match status" value="1"/>
</dbReference>
<dbReference type="Gene3D" id="3.30.1160.10">
    <property type="entry name" value="Cyanate lyase, C-terminal domain"/>
    <property type="match status" value="1"/>
</dbReference>
<dbReference type="Gene3D" id="1.10.260.40">
    <property type="entry name" value="lambda repressor-like DNA-binding domains"/>
    <property type="match status" value="1"/>
</dbReference>
<dbReference type="HAMAP" id="MF_00535">
    <property type="entry name" value="Cyanate_hydrat"/>
    <property type="match status" value="1"/>
</dbReference>
<dbReference type="InterPro" id="IPR008076">
    <property type="entry name" value="Cyanase"/>
</dbReference>
<dbReference type="InterPro" id="IPR003712">
    <property type="entry name" value="Cyanate_lyase_C"/>
</dbReference>
<dbReference type="InterPro" id="IPR036581">
    <property type="entry name" value="Cyanate_lyase_C_sf"/>
</dbReference>
<dbReference type="InterPro" id="IPR048564">
    <property type="entry name" value="CYNS_N"/>
</dbReference>
<dbReference type="InterPro" id="IPR010982">
    <property type="entry name" value="Lambda_DNA-bd_dom_sf"/>
</dbReference>
<dbReference type="NCBIfam" id="TIGR00673">
    <property type="entry name" value="cynS"/>
    <property type="match status" value="1"/>
</dbReference>
<dbReference type="NCBIfam" id="NF002773">
    <property type="entry name" value="PRK02866.1"/>
    <property type="match status" value="1"/>
</dbReference>
<dbReference type="PANTHER" id="PTHR34186">
    <property type="entry name" value="CYANATE HYDRATASE"/>
    <property type="match status" value="1"/>
</dbReference>
<dbReference type="PANTHER" id="PTHR34186:SF2">
    <property type="entry name" value="CYANATE HYDRATASE"/>
    <property type="match status" value="1"/>
</dbReference>
<dbReference type="Pfam" id="PF02560">
    <property type="entry name" value="Cyanate_lyase"/>
    <property type="match status" value="1"/>
</dbReference>
<dbReference type="Pfam" id="PF21291">
    <property type="entry name" value="CYNS_N"/>
    <property type="match status" value="1"/>
</dbReference>
<dbReference type="PIRSF" id="PIRSF001263">
    <property type="entry name" value="Cyanate_hydratas"/>
    <property type="match status" value="1"/>
</dbReference>
<dbReference type="PRINTS" id="PR01693">
    <property type="entry name" value="CYANASE"/>
</dbReference>
<dbReference type="SMART" id="SM01116">
    <property type="entry name" value="Cyanate_lyase"/>
    <property type="match status" value="1"/>
</dbReference>
<dbReference type="SUPFAM" id="SSF55234">
    <property type="entry name" value="Cyanase C-terminal domain"/>
    <property type="match status" value="1"/>
</dbReference>
<dbReference type="SUPFAM" id="SSF47413">
    <property type="entry name" value="lambda repressor-like DNA-binding domains"/>
    <property type="match status" value="1"/>
</dbReference>
<accession>B7NK15</accession>
<proteinExistence type="inferred from homology"/>
<reference key="1">
    <citation type="journal article" date="2009" name="PLoS Genet.">
        <title>Organised genome dynamics in the Escherichia coli species results in highly diverse adaptive paths.</title>
        <authorList>
            <person name="Touchon M."/>
            <person name="Hoede C."/>
            <person name="Tenaillon O."/>
            <person name="Barbe V."/>
            <person name="Baeriswyl S."/>
            <person name="Bidet P."/>
            <person name="Bingen E."/>
            <person name="Bonacorsi S."/>
            <person name="Bouchier C."/>
            <person name="Bouvet O."/>
            <person name="Calteau A."/>
            <person name="Chiapello H."/>
            <person name="Clermont O."/>
            <person name="Cruveiller S."/>
            <person name="Danchin A."/>
            <person name="Diard M."/>
            <person name="Dossat C."/>
            <person name="Karoui M.E."/>
            <person name="Frapy E."/>
            <person name="Garry L."/>
            <person name="Ghigo J.M."/>
            <person name="Gilles A.M."/>
            <person name="Johnson J."/>
            <person name="Le Bouguenec C."/>
            <person name="Lescat M."/>
            <person name="Mangenot S."/>
            <person name="Martinez-Jehanne V."/>
            <person name="Matic I."/>
            <person name="Nassif X."/>
            <person name="Oztas S."/>
            <person name="Petit M.A."/>
            <person name="Pichon C."/>
            <person name="Rouy Z."/>
            <person name="Ruf C.S."/>
            <person name="Schneider D."/>
            <person name="Tourret J."/>
            <person name="Vacherie B."/>
            <person name="Vallenet D."/>
            <person name="Medigue C."/>
            <person name="Rocha E.P.C."/>
            <person name="Denamur E."/>
        </authorList>
    </citation>
    <scope>NUCLEOTIDE SEQUENCE [LARGE SCALE GENOMIC DNA]</scope>
    <source>
        <strain>IAI39 / ExPEC</strain>
    </source>
</reference>
<evidence type="ECO:0000255" key="1">
    <source>
        <dbReference type="HAMAP-Rule" id="MF_00535"/>
    </source>
</evidence>
<feature type="chain" id="PRO_1000128224" description="Cyanate hydratase">
    <location>
        <begin position="1"/>
        <end position="156"/>
    </location>
</feature>
<feature type="active site" evidence="1">
    <location>
        <position position="96"/>
    </location>
</feature>
<feature type="active site" evidence="1">
    <location>
        <position position="99"/>
    </location>
</feature>
<feature type="active site" evidence="1">
    <location>
        <position position="122"/>
    </location>
</feature>
<comment type="function">
    <text evidence="1">Catalyzes the reaction of cyanate with bicarbonate to produce ammonia and carbon dioxide.</text>
</comment>
<comment type="catalytic activity">
    <reaction evidence="1">
        <text>cyanate + hydrogencarbonate + 3 H(+) = NH4(+) + 2 CO2</text>
        <dbReference type="Rhea" id="RHEA:11120"/>
        <dbReference type="ChEBI" id="CHEBI:15378"/>
        <dbReference type="ChEBI" id="CHEBI:16526"/>
        <dbReference type="ChEBI" id="CHEBI:17544"/>
        <dbReference type="ChEBI" id="CHEBI:28938"/>
        <dbReference type="ChEBI" id="CHEBI:29195"/>
        <dbReference type="EC" id="4.2.1.104"/>
    </reaction>
</comment>
<comment type="similarity">
    <text evidence="1">Belongs to the cyanase family.</text>
</comment>
<name>CYNS_ECO7I</name>
<gene>
    <name evidence="1" type="primary">cynS</name>
    <name type="ordered locus">ECIAI39_0338</name>
</gene>
<organism>
    <name type="scientific">Escherichia coli O7:K1 (strain IAI39 / ExPEC)</name>
    <dbReference type="NCBI Taxonomy" id="585057"/>
    <lineage>
        <taxon>Bacteria</taxon>
        <taxon>Pseudomonadati</taxon>
        <taxon>Pseudomonadota</taxon>
        <taxon>Gammaproteobacteria</taxon>
        <taxon>Enterobacterales</taxon>
        <taxon>Enterobacteriaceae</taxon>
        <taxon>Escherichia</taxon>
    </lineage>
</organism>
<keyword id="KW-0456">Lyase</keyword>
<sequence>MIQSQINRNIRLDLADAILLSKAKKDLSFAEIADGTGLAEAFVTAALLGQQALPADAARLVGAKLDLDEDAILLLQMIPLRGCIDDRIPTDPTMYRFYEMLQVYGTTLKALVHEKFGDGIISAINFKLDVKKVADPEGGERAVITLDGKYLPTKPF</sequence>